<protein>
    <recommendedName>
        <fullName>Interleukin-17B</fullName>
        <shortName>IL-17B</shortName>
    </recommendedName>
    <alternativeName>
        <fullName>Cytokine CX1</fullName>
    </alternativeName>
    <alternativeName>
        <fullName>Cytokine-like protein ZCYTO7</fullName>
    </alternativeName>
    <alternativeName>
        <fullName>Neuronal interleukin-17-related factor</fullName>
    </alternativeName>
</protein>
<keyword id="KW-0202">Cytokine</keyword>
<keyword id="KW-1015">Disulfide bond</keyword>
<keyword id="KW-0325">Glycoprotein</keyword>
<keyword id="KW-1185">Reference proteome</keyword>
<keyword id="KW-0964">Secreted</keyword>
<keyword id="KW-0732">Signal</keyword>
<name>IL17B_MOUSE</name>
<feature type="signal peptide" evidence="2">
    <location>
        <begin position="1"/>
        <end position="22"/>
    </location>
</feature>
<feature type="chain" id="PRO_0000015428" description="Interleukin-17B">
    <location>
        <begin position="23"/>
        <end position="180"/>
    </location>
</feature>
<feature type="region of interest" description="Disordered" evidence="3">
    <location>
        <begin position="22"/>
        <end position="44"/>
    </location>
</feature>
<feature type="compositionally biased region" description="Basic residues" evidence="3">
    <location>
        <begin position="23"/>
        <end position="32"/>
    </location>
</feature>
<feature type="glycosylation site" description="N-linked (GlcNAc...) asparagine" evidence="2">
    <location>
        <position position="75"/>
    </location>
</feature>
<feature type="disulfide bond" evidence="1">
    <location>
        <begin position="121"/>
        <end position="176"/>
    </location>
</feature>
<feature type="disulfide bond" evidence="1">
    <location>
        <begin position="126"/>
        <end position="178"/>
    </location>
</feature>
<feature type="sequence conflict" description="In Ref. 4." evidence="4" ref="4">
    <original>MDWPHSL</original>
    <variation>YPTSTFS</variation>
    <location>
        <begin position="1"/>
        <end position="7"/>
    </location>
</feature>
<feature type="sequence conflict" description="In Ref. 4." evidence="4" ref="4">
    <original>G</original>
    <variation>R</variation>
    <location>
        <position position="33"/>
    </location>
</feature>
<feature type="sequence conflict" description="In Ref. 3; AAK37427." evidence="4" ref="3">
    <original>R</original>
    <variation>K</variation>
    <location>
        <position position="34"/>
    </location>
</feature>
<feature type="sequence conflict" description="In Ref. 3; AAK37427." evidence="4" ref="3">
    <original>N</original>
    <variation>T</variation>
    <location>
        <position position="65"/>
    </location>
</feature>
<feature type="sequence conflict" description="In Ref. 4." evidence="4" ref="4">
    <original>S</original>
    <variation>I</variation>
    <location>
        <position position="76"/>
    </location>
</feature>
<evidence type="ECO:0000250" key="1"/>
<evidence type="ECO:0000255" key="2"/>
<evidence type="ECO:0000256" key="3">
    <source>
        <dbReference type="SAM" id="MobiDB-lite"/>
    </source>
</evidence>
<evidence type="ECO:0000305" key="4"/>
<reference key="1">
    <citation type="submission" date="1999-09" db="EMBL/GenBank/DDBJ databases">
        <authorList>
            <person name="Presnell S."/>
            <person name="Gilbert T."/>
            <person name="Whitmore T."/>
            <person name="Foster D."/>
            <person name="Hart C."/>
            <person name="Lehner J."/>
            <person name="Martinez T."/>
            <person name="Hoffman R."/>
            <person name="O'Hara P."/>
        </authorList>
    </citation>
    <scope>NUCLEOTIDE SEQUENCE [MRNA]</scope>
</reference>
<reference key="2">
    <citation type="submission" date="1999-12" db="EMBL/GenBank/DDBJ databases">
        <title>Identification of a novel IL-17 related factor: demonstration of neuronal expression and evaluation as a candidate for the chromosome 5q-linked form of Charcot-Marie-Tooth disease.</title>
        <authorList>
            <person name="Moore E.E."/>
            <person name="Presnell S."/>
            <person name="Garrigues U."/>
            <person name="Guilbot A."/>
            <person name="LeGuern E."/>
            <person name="Smith D."/>
            <person name="Yao L."/>
            <person name="Whitmore T.E."/>
            <person name="Gilbert T."/>
            <person name="Kuestner R.E."/>
        </authorList>
    </citation>
    <scope>NUCLEOTIDE SEQUENCE [MRNA]</scope>
</reference>
<reference key="3">
    <citation type="submission" date="2000-03" db="EMBL/GenBank/DDBJ databases">
        <authorList>
            <person name="Zhang W."/>
            <person name="Cao X."/>
        </authorList>
    </citation>
    <scope>NUCLEOTIDE SEQUENCE [MRNA]</scope>
    <source>
        <strain>BALB/cJ</strain>
    </source>
</reference>
<reference key="4">
    <citation type="journal article" date="2005" name="Science">
        <title>The transcriptional landscape of the mammalian genome.</title>
        <authorList>
            <person name="Carninci P."/>
            <person name="Kasukawa T."/>
            <person name="Katayama S."/>
            <person name="Gough J."/>
            <person name="Frith M.C."/>
            <person name="Maeda N."/>
            <person name="Oyama R."/>
            <person name="Ravasi T."/>
            <person name="Lenhard B."/>
            <person name="Wells C."/>
            <person name="Kodzius R."/>
            <person name="Shimokawa K."/>
            <person name="Bajic V.B."/>
            <person name="Brenner S.E."/>
            <person name="Batalov S."/>
            <person name="Forrest A.R."/>
            <person name="Zavolan M."/>
            <person name="Davis M.J."/>
            <person name="Wilming L.G."/>
            <person name="Aidinis V."/>
            <person name="Allen J.E."/>
            <person name="Ambesi-Impiombato A."/>
            <person name="Apweiler R."/>
            <person name="Aturaliya R.N."/>
            <person name="Bailey T.L."/>
            <person name="Bansal M."/>
            <person name="Baxter L."/>
            <person name="Beisel K.W."/>
            <person name="Bersano T."/>
            <person name="Bono H."/>
            <person name="Chalk A.M."/>
            <person name="Chiu K.P."/>
            <person name="Choudhary V."/>
            <person name="Christoffels A."/>
            <person name="Clutterbuck D.R."/>
            <person name="Crowe M.L."/>
            <person name="Dalla E."/>
            <person name="Dalrymple B.P."/>
            <person name="de Bono B."/>
            <person name="Della Gatta G."/>
            <person name="di Bernardo D."/>
            <person name="Down T."/>
            <person name="Engstrom P."/>
            <person name="Fagiolini M."/>
            <person name="Faulkner G."/>
            <person name="Fletcher C.F."/>
            <person name="Fukushima T."/>
            <person name="Furuno M."/>
            <person name="Futaki S."/>
            <person name="Gariboldi M."/>
            <person name="Georgii-Hemming P."/>
            <person name="Gingeras T.R."/>
            <person name="Gojobori T."/>
            <person name="Green R.E."/>
            <person name="Gustincich S."/>
            <person name="Harbers M."/>
            <person name="Hayashi Y."/>
            <person name="Hensch T.K."/>
            <person name="Hirokawa N."/>
            <person name="Hill D."/>
            <person name="Huminiecki L."/>
            <person name="Iacono M."/>
            <person name="Ikeo K."/>
            <person name="Iwama A."/>
            <person name="Ishikawa T."/>
            <person name="Jakt M."/>
            <person name="Kanapin A."/>
            <person name="Katoh M."/>
            <person name="Kawasawa Y."/>
            <person name="Kelso J."/>
            <person name="Kitamura H."/>
            <person name="Kitano H."/>
            <person name="Kollias G."/>
            <person name="Krishnan S.P."/>
            <person name="Kruger A."/>
            <person name="Kummerfeld S.K."/>
            <person name="Kurochkin I.V."/>
            <person name="Lareau L.F."/>
            <person name="Lazarevic D."/>
            <person name="Lipovich L."/>
            <person name="Liu J."/>
            <person name="Liuni S."/>
            <person name="McWilliam S."/>
            <person name="Madan Babu M."/>
            <person name="Madera M."/>
            <person name="Marchionni L."/>
            <person name="Matsuda H."/>
            <person name="Matsuzawa S."/>
            <person name="Miki H."/>
            <person name="Mignone F."/>
            <person name="Miyake S."/>
            <person name="Morris K."/>
            <person name="Mottagui-Tabar S."/>
            <person name="Mulder N."/>
            <person name="Nakano N."/>
            <person name="Nakauchi H."/>
            <person name="Ng P."/>
            <person name="Nilsson R."/>
            <person name="Nishiguchi S."/>
            <person name="Nishikawa S."/>
            <person name="Nori F."/>
            <person name="Ohara O."/>
            <person name="Okazaki Y."/>
            <person name="Orlando V."/>
            <person name="Pang K.C."/>
            <person name="Pavan W.J."/>
            <person name="Pavesi G."/>
            <person name="Pesole G."/>
            <person name="Petrovsky N."/>
            <person name="Piazza S."/>
            <person name="Reed J."/>
            <person name="Reid J.F."/>
            <person name="Ring B.Z."/>
            <person name="Ringwald M."/>
            <person name="Rost B."/>
            <person name="Ruan Y."/>
            <person name="Salzberg S.L."/>
            <person name="Sandelin A."/>
            <person name="Schneider C."/>
            <person name="Schoenbach C."/>
            <person name="Sekiguchi K."/>
            <person name="Semple C.A."/>
            <person name="Seno S."/>
            <person name="Sessa L."/>
            <person name="Sheng Y."/>
            <person name="Shibata Y."/>
            <person name="Shimada H."/>
            <person name="Shimada K."/>
            <person name="Silva D."/>
            <person name="Sinclair B."/>
            <person name="Sperling S."/>
            <person name="Stupka E."/>
            <person name="Sugiura K."/>
            <person name="Sultana R."/>
            <person name="Takenaka Y."/>
            <person name="Taki K."/>
            <person name="Tammoja K."/>
            <person name="Tan S.L."/>
            <person name="Tang S."/>
            <person name="Taylor M.S."/>
            <person name="Tegner J."/>
            <person name="Teichmann S.A."/>
            <person name="Ueda H.R."/>
            <person name="van Nimwegen E."/>
            <person name="Verardo R."/>
            <person name="Wei C.L."/>
            <person name="Yagi K."/>
            <person name="Yamanishi H."/>
            <person name="Zabarovsky E."/>
            <person name="Zhu S."/>
            <person name="Zimmer A."/>
            <person name="Hide W."/>
            <person name="Bult C."/>
            <person name="Grimmond S.M."/>
            <person name="Teasdale R.D."/>
            <person name="Liu E.T."/>
            <person name="Brusic V."/>
            <person name="Quackenbush J."/>
            <person name="Wahlestedt C."/>
            <person name="Mattick J.S."/>
            <person name="Hume D.A."/>
            <person name="Kai C."/>
            <person name="Sasaki D."/>
            <person name="Tomaru Y."/>
            <person name="Fukuda S."/>
            <person name="Kanamori-Katayama M."/>
            <person name="Suzuki M."/>
            <person name="Aoki J."/>
            <person name="Arakawa T."/>
            <person name="Iida J."/>
            <person name="Imamura K."/>
            <person name="Itoh M."/>
            <person name="Kato T."/>
            <person name="Kawaji H."/>
            <person name="Kawagashira N."/>
            <person name="Kawashima T."/>
            <person name="Kojima M."/>
            <person name="Kondo S."/>
            <person name="Konno H."/>
            <person name="Nakano K."/>
            <person name="Ninomiya N."/>
            <person name="Nishio T."/>
            <person name="Okada M."/>
            <person name="Plessy C."/>
            <person name="Shibata K."/>
            <person name="Shiraki T."/>
            <person name="Suzuki S."/>
            <person name="Tagami M."/>
            <person name="Waki K."/>
            <person name="Watahiki A."/>
            <person name="Okamura-Oho Y."/>
            <person name="Suzuki H."/>
            <person name="Kawai J."/>
            <person name="Hayashizaki Y."/>
        </authorList>
    </citation>
    <scope>NUCLEOTIDE SEQUENCE [LARGE SCALE MRNA]</scope>
    <source>
        <strain>C57BL/6J</strain>
        <tissue>Embryo</tissue>
    </source>
</reference>
<reference key="5">
    <citation type="journal article" date="2004" name="Genome Res.">
        <title>The status, quality, and expansion of the NIH full-length cDNA project: the Mammalian Gene Collection (MGC).</title>
        <authorList>
            <consortium name="The MGC Project Team"/>
        </authorList>
    </citation>
    <scope>NUCLEOTIDE SEQUENCE [LARGE SCALE MRNA]</scope>
</reference>
<sequence length="180" mass="20309">MDWPHSLLFLLAISIFLAPSHPRNTKGKRKGQGRPSPLAPGPHQVPLDLVSRVKPYARMEEYERNLGEMVAQLRNSSEPAKKKCEVNLQLWLSNKRSLSPWGYSINHDPSRIPADLPEARCLCLGCVNPFTMQEDRSMVSVPVFSQVPVRRRLCPQPPRPGPCRQRVVMETIAVGCTCIF</sequence>
<gene>
    <name type="primary">Il17b</name>
    <name type="synonym">Nirf</name>
    <name type="synonym">Zcyto7</name>
</gene>
<proteinExistence type="evidence at transcript level"/>
<accession>Q9QXT6</accession>
<accession>Q99MY3</accession>
<accession>Q9CTI4</accession>
<dbReference type="EMBL" id="AF184970">
    <property type="protein sequence ID" value="AAF01319.1"/>
    <property type="molecule type" value="mRNA"/>
</dbReference>
<dbReference type="EMBL" id="AF218726">
    <property type="protein sequence ID" value="AAG44135.1"/>
    <property type="molecule type" value="mRNA"/>
</dbReference>
<dbReference type="EMBL" id="AF250308">
    <property type="protein sequence ID" value="AAK37427.1"/>
    <property type="molecule type" value="mRNA"/>
</dbReference>
<dbReference type="EMBL" id="AK003506">
    <property type="status" value="NOT_ANNOTATED_CDS"/>
    <property type="molecule type" value="mRNA"/>
</dbReference>
<dbReference type="EMBL" id="BC002271">
    <property type="protein sequence ID" value="AAH02271.1"/>
    <property type="molecule type" value="mRNA"/>
</dbReference>
<dbReference type="CCDS" id="CCDS29286.1"/>
<dbReference type="RefSeq" id="NP_062381.1">
    <property type="nucleotide sequence ID" value="NM_019508.1"/>
</dbReference>
<dbReference type="SMR" id="Q9QXT6"/>
<dbReference type="FunCoup" id="Q9QXT6">
    <property type="interactions" value="281"/>
</dbReference>
<dbReference type="STRING" id="10090.ENSMUSP00000025471"/>
<dbReference type="GlyCosmos" id="Q9QXT6">
    <property type="glycosylation" value="1 site, No reported glycans"/>
</dbReference>
<dbReference type="GlyGen" id="Q9QXT6">
    <property type="glycosylation" value="1 site"/>
</dbReference>
<dbReference type="PaxDb" id="10090-ENSMUSP00000025471"/>
<dbReference type="ProteomicsDB" id="269388"/>
<dbReference type="Antibodypedia" id="27818">
    <property type="antibodies" value="459 antibodies from 32 providers"/>
</dbReference>
<dbReference type="DNASU" id="56069"/>
<dbReference type="Ensembl" id="ENSMUST00000025471.4">
    <property type="protein sequence ID" value="ENSMUSP00000025471.3"/>
    <property type="gene ID" value="ENSMUSG00000024578.4"/>
</dbReference>
<dbReference type="GeneID" id="56069"/>
<dbReference type="KEGG" id="mmu:56069"/>
<dbReference type="UCSC" id="uc008fck.1">
    <property type="organism name" value="mouse"/>
</dbReference>
<dbReference type="AGR" id="MGI:1928397"/>
<dbReference type="CTD" id="27190"/>
<dbReference type="MGI" id="MGI:1928397">
    <property type="gene designation" value="Il17b"/>
</dbReference>
<dbReference type="VEuPathDB" id="HostDB:ENSMUSG00000024578"/>
<dbReference type="eggNOG" id="ENOG502S074">
    <property type="taxonomic scope" value="Eukaryota"/>
</dbReference>
<dbReference type="GeneTree" id="ENSGT00940000160854"/>
<dbReference type="HOGENOM" id="CLU_100619_1_0_1"/>
<dbReference type="InParanoid" id="Q9QXT6"/>
<dbReference type="OMA" id="WPHNLLL"/>
<dbReference type="OrthoDB" id="9896444at2759"/>
<dbReference type="PhylomeDB" id="Q9QXT6"/>
<dbReference type="TreeFam" id="TF314701"/>
<dbReference type="BioGRID-ORCS" id="56069">
    <property type="hits" value="3 hits in 76 CRISPR screens"/>
</dbReference>
<dbReference type="ChiTaRS" id="Il17b">
    <property type="organism name" value="mouse"/>
</dbReference>
<dbReference type="PRO" id="PR:Q9QXT6"/>
<dbReference type="Proteomes" id="UP000000589">
    <property type="component" value="Chromosome 18"/>
</dbReference>
<dbReference type="RNAct" id="Q9QXT6">
    <property type="molecule type" value="protein"/>
</dbReference>
<dbReference type="Bgee" id="ENSMUSG00000024578">
    <property type="expression patterns" value="Expressed in mammary bud and 52 other cell types or tissues"/>
</dbReference>
<dbReference type="ExpressionAtlas" id="Q9QXT6">
    <property type="expression patterns" value="baseline and differential"/>
</dbReference>
<dbReference type="GO" id="GO:0005615">
    <property type="term" value="C:extracellular space"/>
    <property type="evidence" value="ECO:0007669"/>
    <property type="project" value="UniProtKB-KW"/>
</dbReference>
<dbReference type="GO" id="GO:0005125">
    <property type="term" value="F:cytokine activity"/>
    <property type="evidence" value="ECO:0000314"/>
    <property type="project" value="MGI"/>
</dbReference>
<dbReference type="GO" id="GO:0005102">
    <property type="term" value="F:signaling receptor binding"/>
    <property type="evidence" value="ECO:0000266"/>
    <property type="project" value="MGI"/>
</dbReference>
<dbReference type="GO" id="GO:0006954">
    <property type="term" value="P:inflammatory response"/>
    <property type="evidence" value="ECO:0007669"/>
    <property type="project" value="InterPro"/>
</dbReference>
<dbReference type="GO" id="GO:0030593">
    <property type="term" value="P:neutrophil chemotaxis"/>
    <property type="evidence" value="ECO:0000266"/>
    <property type="project" value="MGI"/>
</dbReference>
<dbReference type="GO" id="GO:1900017">
    <property type="term" value="P:positive regulation of cytokine production involved in inflammatory response"/>
    <property type="evidence" value="ECO:0000314"/>
    <property type="project" value="MGI"/>
</dbReference>
<dbReference type="FunFam" id="2.10.90.10:FF:000034">
    <property type="entry name" value="Interleukin 17B"/>
    <property type="match status" value="1"/>
</dbReference>
<dbReference type="Gene3D" id="2.10.90.10">
    <property type="entry name" value="Cystine-knot cytokines"/>
    <property type="match status" value="1"/>
</dbReference>
<dbReference type="InterPro" id="IPR029034">
    <property type="entry name" value="Cystine-knot_cytokine"/>
</dbReference>
<dbReference type="InterPro" id="IPR020440">
    <property type="entry name" value="IL-17_chr"/>
</dbReference>
<dbReference type="InterPro" id="IPR010345">
    <property type="entry name" value="IL-17_fam"/>
</dbReference>
<dbReference type="Pfam" id="PF06083">
    <property type="entry name" value="IL17"/>
    <property type="match status" value="1"/>
</dbReference>
<dbReference type="PRINTS" id="PR01932">
    <property type="entry name" value="INTRLEUKIN17"/>
</dbReference>
<dbReference type="SUPFAM" id="SSF57501">
    <property type="entry name" value="Cystine-knot cytokines"/>
    <property type="match status" value="1"/>
</dbReference>
<comment type="function">
    <text evidence="1">Stimulates the release of tumor necrosis factor alpha and IL-1-beta from the monocytic cell line THP-1.</text>
</comment>
<comment type="subcellular location">
    <subcellularLocation>
        <location>Secreted</location>
    </subcellularLocation>
</comment>
<comment type="similarity">
    <text evidence="4">Belongs to the IL-17 family.</text>
</comment>
<organism>
    <name type="scientific">Mus musculus</name>
    <name type="common">Mouse</name>
    <dbReference type="NCBI Taxonomy" id="10090"/>
    <lineage>
        <taxon>Eukaryota</taxon>
        <taxon>Metazoa</taxon>
        <taxon>Chordata</taxon>
        <taxon>Craniata</taxon>
        <taxon>Vertebrata</taxon>
        <taxon>Euteleostomi</taxon>
        <taxon>Mammalia</taxon>
        <taxon>Eutheria</taxon>
        <taxon>Euarchontoglires</taxon>
        <taxon>Glires</taxon>
        <taxon>Rodentia</taxon>
        <taxon>Myomorpha</taxon>
        <taxon>Muroidea</taxon>
        <taxon>Muridae</taxon>
        <taxon>Murinae</taxon>
        <taxon>Mus</taxon>
        <taxon>Mus</taxon>
    </lineage>
</organism>